<organism>
    <name type="scientific">Fusarium sp</name>
    <dbReference type="NCBI Taxonomy" id="29916"/>
    <lineage>
        <taxon>Eukaryota</taxon>
        <taxon>Fungi</taxon>
        <taxon>Dikarya</taxon>
        <taxon>Ascomycota</taxon>
        <taxon>Pezizomycotina</taxon>
        <taxon>Sordariomycetes</taxon>
        <taxon>Hypocreomycetidae</taxon>
        <taxon>Hypocreales</taxon>
        <taxon>Nectriaceae</taxon>
        <taxon>Fusarium</taxon>
    </lineage>
</organism>
<gene>
    <name evidence="8" type="primary">g433</name>
</gene>
<keyword id="KW-0012">Acyltransferase</keyword>
<keyword id="KW-0489">Methyltransferase</keyword>
<keyword id="KW-0511">Multifunctional enzyme</keyword>
<keyword id="KW-0521">NADP</keyword>
<keyword id="KW-0560">Oxidoreductase</keyword>
<keyword id="KW-0596">Phosphopantetheine</keyword>
<keyword id="KW-0597">Phosphoprotein</keyword>
<keyword id="KW-0808">Transferase</keyword>
<protein>
    <recommendedName>
        <fullName evidence="8">Highly reducing polyketide synthase g433</fullName>
        <shortName evidence="8">HR-PKS g433</shortName>
        <ecNumber evidence="9">2.3.1.-</ecNumber>
    </recommendedName>
    <alternativeName>
        <fullName evidence="8">1233A biosynthesis cluster protein g433</fullName>
    </alternativeName>
</protein>
<proteinExistence type="evidence at transcript level"/>
<feature type="chain" id="PRO_0000454632" description="Highly reducing polyketide synthase g433">
    <location>
        <begin position="1"/>
        <end position="2510"/>
    </location>
</feature>
<feature type="domain" description="Ketosynthase family 3 (KS3)" evidence="4">
    <location>
        <begin position="58"/>
        <end position="477"/>
    </location>
</feature>
<feature type="domain" description="PKS/mFAS DH" evidence="5">
    <location>
        <begin position="942"/>
        <end position="1229"/>
    </location>
</feature>
<feature type="domain" description="Carrier" evidence="3">
    <location>
        <begin position="2419"/>
        <end position="2496"/>
    </location>
</feature>
<feature type="region of interest" description="Disordered" evidence="6">
    <location>
        <begin position="1"/>
        <end position="54"/>
    </location>
</feature>
<feature type="region of interest" description="Malonyl-CoA:ACP transacylase (MAT) domain" evidence="1 2">
    <location>
        <begin position="574"/>
        <end position="880"/>
    </location>
</feature>
<feature type="region of interest" description="Dehydratase (DH) domain" evidence="1 2">
    <location>
        <begin position="942"/>
        <end position="1226"/>
    </location>
</feature>
<feature type="region of interest" description="N-terminal hotdog fold" evidence="5">
    <location>
        <begin position="942"/>
        <end position="1070"/>
    </location>
</feature>
<feature type="region of interest" description="C-terminal hotdog fold" evidence="5">
    <location>
        <begin position="1083"/>
        <end position="1229"/>
    </location>
</feature>
<feature type="region of interest" description="Methyltransferase (CMet) domain" evidence="1 2">
    <location>
        <begin position="1395"/>
        <end position="1574"/>
    </location>
</feature>
<feature type="region of interest" description="Enoyl reductase (ER) (ER) domain" evidence="1 2">
    <location>
        <begin position="1787"/>
        <end position="2097"/>
    </location>
</feature>
<feature type="region of interest" description="Ketoreductase (KR) domain" evidence="1 2">
    <location>
        <begin position="2122"/>
        <end position="2296"/>
    </location>
</feature>
<feature type="compositionally biased region" description="Low complexity" evidence="6">
    <location>
        <begin position="22"/>
        <end position="45"/>
    </location>
</feature>
<feature type="active site" description="For beta-ketoacyl synthase activity" evidence="4">
    <location>
        <position position="229"/>
    </location>
</feature>
<feature type="active site" description="For beta-ketoacyl synthase activity" evidence="4">
    <location>
        <position position="365"/>
    </location>
</feature>
<feature type="active site" description="For beta-ketoacyl synthase activity" evidence="4">
    <location>
        <position position="400"/>
    </location>
</feature>
<feature type="active site" description="Proton acceptor; for dehydratase activity" evidence="5">
    <location>
        <position position="974"/>
    </location>
</feature>
<feature type="active site" description="Proton donor; for dehydratase activity" evidence="5">
    <location>
        <position position="1144"/>
    </location>
</feature>
<feature type="modified residue" description="O-(pantetheine 4'-phosphoryl)serine" evidence="3">
    <location>
        <position position="2456"/>
    </location>
</feature>
<reference key="1">
    <citation type="journal article" date="2020" name="J. Antibiot.">
        <title>Induction of secondary metabolite production by hygromycin B and identification of the 1233A biosynthetic gene cluster with a self-resistance gene.</title>
        <authorList>
            <person name="Kato S."/>
            <person name="Motoyama T."/>
            <person name="Uramoto M."/>
            <person name="Nogawa T."/>
            <person name="Kamakura T."/>
            <person name="Osada H."/>
        </authorList>
    </citation>
    <scope>NUCLEOTIDE SEQUENCE [GENOMIC DNA]</scope>
    <scope>FUNCTION</scope>
    <scope>INDUCTION</scope>
    <scope>DISRUPTION PHENOTYPE</scope>
    <scope>DOMAIN</scope>
    <scope>PATHWAY</scope>
    <source>
        <strain>RK97-94</strain>
    </source>
</reference>
<sequence>MAPGRTDVTVAENGNGLHTAHNGVSNGTSNGTNGTSHTSNGTNSSAKTTSNGVHSHEDIPIAIVGMGLRLPGGIGTEEDLWDTLINKKDQRQRVPADRWNVDAFYSKTNKRGTVKTEHGYFLADEDLQQFDTSFFSITRNELEKLDPQHRLLLEVTRECLENAGELDWRGKDIGCYVGVFGEDWLDLHAKDSQDFGIYRITGAGDFVLANRISYEYDLKGPSITVKTACSSALICLHMACDAIRSGEISSAIVGGANLLMSPTMTIAMSEQGVLSGDGSCKTFDAAADGYARAEAVNALYVKRLDHAIRDGNPIRGIVRGTGSNCDGKTAGLSHPSPESHEALIRRTYQQAGIDDFCQTAFVECHGTGTATGDPLETSAIGNVFGEKGVYITSVKPNVGHSEGASGITSCIKAILAMEKKTIPPNIKFNNPNPQIPFKKAKLQVPVEPTPWPQDRQERVSINAFGIGGANAHAVIDSAESYGVNSMRATRSSTEPLRQSLVVFSSNHMNSARNGTANLQKYLTKHPGSVKDLAYTTGVRRERLPYRSFAVSDGSAPLEFTAPSRTPATTPGVTFVFTGQGAQWATMGVNLLEEFPSAEEDFKNLDKALSQLPYPPSWSIADELLRSKEESRLDQAEFSQPLCTAVQVVIVNLLRAWNISPSRVIGHSSGELAAAYASGAITAAEAIIGAYYRGLVTKQQARPGAMAAVGFGREDVASYLTEGVTIACENSPESTTLSGDADKIDAVIAKIKESHPDVLARRLRVEMAYHSYHMADVGTRYQELLEPHVSSTRPDVPFYSTVLEKVITEKSAMNASYWRRNMESPVLFNTTMAKLLTDECANNLFLEIGPHSALAGPLRQIFKKHQPDALYVPTLVRGQNDTTSLLSTAGNLFVKGLAVDIGAVNDGGSILTDLPTYPWHHEDTFWDESRLTREWRKRKFPRHDLLGCQVFEGSSLEPTWRNMLCLEDVPWIRDHVIGPDIVFPGAGYIAMAGEAIRQVADAQDYTVRNLSVKSAMILHEPVTTEILFSLRPHRLTTSLDSAWYEFTVSSHNGTGWTKHCTGQVKAGRADSGSVSEPPQATTLPRKVSSTRWYQTMSKVGINYGPTFQGLEDVSAHPVNNFAVAKVTNTVDPNESTYQLHPTTTDYAIQLFSVAAWKGQARDFVQMPLPAYFGEVYMKRPQTNEQLQLSSNVTVTARGAVHGDGFATVGGEVVLEFRNLRLAPAADDTGGDDQDPHAGVRLQWKPDVAFLDSKDLIRTTKSIRSCYPTVQRLLLLCSIECTERLASLPPSGVEHLEKFKTWLAAHVEQAKADGYEAVDDVNSLFALSRDDRLSLIETTAQEVKASYAEAVGNAICRVFENVEGIFTSEADALDLLMQDDILRKIYDLVIEFWDFKDFLGLVSHDKPNLKVLEIGAGTGATTALILDGLVSELGEQMFYSYTYTDISAGFFVQAKERFKNVHSIEYAVLDISQDPAEQGFELGSYDLVIATNVLHATPSLQETLVNVRKLLQPKGKLMLQELCSSTKWFNFIVGVLPGWWLGEPDGRPEEPYVGPERWARELTQAGFDGAEAVIYDEEKPYHTNATIIAHPLVEPKVNKKISILTTDPNGAAATLLAQSLTRQNFMVDFCSFQDAPQSDHDIISVLDLEGRPFLADISADKFHSLQTFITKLSSSGMLWLTKSAQMNSSEPEYAQIVGLARSVRNELSIDLATVEMDNTQDETTFNRVINILSKFQNRSKNLDIDPEFEYAISNGVINISRFHWISVSNELAAGTDSTAPKTLEIGKRGSLKTLRWVQRSEIKLIGDEVAVEVRAAGMNFKDILISMGIVDGNVDDGNGLGCECAGVVTQVGPDAPFHVGDRVAIIGGDSYSTVLKTTSTLCARIPDNLSFEDAATMPCVYTTVIHSLLDLAKIEKDQTVLIQSACGGIGIAAINICRMIFATVGSQEKIDYLMSTFGIPRNHIFNSRNSSFLPDVMRETSGVGVDVVLNSLSGDLLHASWKCVAEFGKMVEIGKRDFIGQGKLAMEAFEANRTFYGVDFAPIAEKRPYIIKRLLERTMEFFRLGAIQPIRPIKFFDATQIEDALRYMQKGQHMGKLVIQFPTDHSQLTSSRGNNRLVLRSDASYLLVGGLGGLGRSISTWMVEHGARHFIYLSRSGGKGPDDAAFVQEMNAAGCTVQITAGSVANLADVQRAINQAEYPVAGVLQMSMVLRDASFPNMTHDEWQAANLPKIKGTWNLHEAFASQPLDFFVLFSSFSGLLGHWGQANYAAANTFLDAFAQYRHGLGLPASVLDISIIEDVGWVSQEPGHLEQLKATAAYCLKEQHLLDSLELAITKSAPQTWEPKSPMDGYMNASQIGLGMRMTMPIAADANRCIWKRDIRMGLYRNLENSGVDDAGTGNEGLREFLTGVTTNPESLKEPSSVSFLANEIGSTLFSFLMRPIEELDVKQPLSAVGLDSLVAIELRNWSRQRLGVELSVLEILGAASIEKLGEAAAEGLLVKLGGATTNGDAQ</sequence>
<dbReference type="EC" id="2.3.1.-" evidence="9"/>
<dbReference type="EMBL" id="LC516401">
    <property type="protein sequence ID" value="BBU37368.1"/>
    <property type="molecule type" value="Genomic_DNA"/>
</dbReference>
<dbReference type="SMR" id="A0A6S5ZY48"/>
<dbReference type="GO" id="GO:0004315">
    <property type="term" value="F:3-oxoacyl-[acyl-carrier-protein] synthase activity"/>
    <property type="evidence" value="ECO:0007669"/>
    <property type="project" value="InterPro"/>
</dbReference>
<dbReference type="GO" id="GO:0004312">
    <property type="term" value="F:fatty acid synthase activity"/>
    <property type="evidence" value="ECO:0007669"/>
    <property type="project" value="TreeGrafter"/>
</dbReference>
<dbReference type="GO" id="GO:0008168">
    <property type="term" value="F:methyltransferase activity"/>
    <property type="evidence" value="ECO:0007669"/>
    <property type="project" value="UniProtKB-KW"/>
</dbReference>
<dbReference type="GO" id="GO:0016491">
    <property type="term" value="F:oxidoreductase activity"/>
    <property type="evidence" value="ECO:0007669"/>
    <property type="project" value="UniProtKB-KW"/>
</dbReference>
<dbReference type="GO" id="GO:0031177">
    <property type="term" value="F:phosphopantetheine binding"/>
    <property type="evidence" value="ECO:0007669"/>
    <property type="project" value="InterPro"/>
</dbReference>
<dbReference type="GO" id="GO:0006633">
    <property type="term" value="P:fatty acid biosynthetic process"/>
    <property type="evidence" value="ECO:0007669"/>
    <property type="project" value="InterPro"/>
</dbReference>
<dbReference type="GO" id="GO:0032259">
    <property type="term" value="P:methylation"/>
    <property type="evidence" value="ECO:0007669"/>
    <property type="project" value="UniProtKB-KW"/>
</dbReference>
<dbReference type="GO" id="GO:0044550">
    <property type="term" value="P:secondary metabolite biosynthetic process"/>
    <property type="evidence" value="ECO:0007669"/>
    <property type="project" value="UniProtKB-ARBA"/>
</dbReference>
<dbReference type="CDD" id="cd02440">
    <property type="entry name" value="AdoMet_MTases"/>
    <property type="match status" value="1"/>
</dbReference>
<dbReference type="CDD" id="cd05195">
    <property type="entry name" value="enoyl_red"/>
    <property type="match status" value="1"/>
</dbReference>
<dbReference type="CDD" id="cd00833">
    <property type="entry name" value="PKS"/>
    <property type="match status" value="1"/>
</dbReference>
<dbReference type="Gene3D" id="3.40.47.10">
    <property type="match status" value="1"/>
</dbReference>
<dbReference type="Gene3D" id="1.10.1200.10">
    <property type="entry name" value="ACP-like"/>
    <property type="match status" value="1"/>
</dbReference>
<dbReference type="Gene3D" id="3.40.366.10">
    <property type="entry name" value="Malonyl-Coenzyme A Acyl Carrier Protein, domain 2"/>
    <property type="match status" value="1"/>
</dbReference>
<dbReference type="Gene3D" id="3.90.180.10">
    <property type="entry name" value="Medium-chain alcohol dehydrogenases, catalytic domain"/>
    <property type="match status" value="1"/>
</dbReference>
<dbReference type="Gene3D" id="3.40.50.720">
    <property type="entry name" value="NAD(P)-binding Rossmann-like Domain"/>
    <property type="match status" value="1"/>
</dbReference>
<dbReference type="Gene3D" id="3.10.129.110">
    <property type="entry name" value="Polyketide synthase dehydratase"/>
    <property type="match status" value="1"/>
</dbReference>
<dbReference type="Gene3D" id="3.40.50.150">
    <property type="entry name" value="Vaccinia Virus protein VP39"/>
    <property type="match status" value="1"/>
</dbReference>
<dbReference type="InterPro" id="IPR001227">
    <property type="entry name" value="Ac_transferase_dom_sf"/>
</dbReference>
<dbReference type="InterPro" id="IPR036736">
    <property type="entry name" value="ACP-like_sf"/>
</dbReference>
<dbReference type="InterPro" id="IPR014043">
    <property type="entry name" value="Acyl_transferase_dom"/>
</dbReference>
<dbReference type="InterPro" id="IPR016035">
    <property type="entry name" value="Acyl_Trfase/lysoPLipase"/>
</dbReference>
<dbReference type="InterPro" id="IPR013154">
    <property type="entry name" value="ADH-like_N"/>
</dbReference>
<dbReference type="InterPro" id="IPR011032">
    <property type="entry name" value="GroES-like_sf"/>
</dbReference>
<dbReference type="InterPro" id="IPR018201">
    <property type="entry name" value="Ketoacyl_synth_AS"/>
</dbReference>
<dbReference type="InterPro" id="IPR014031">
    <property type="entry name" value="Ketoacyl_synth_C"/>
</dbReference>
<dbReference type="InterPro" id="IPR014030">
    <property type="entry name" value="Ketoacyl_synth_N"/>
</dbReference>
<dbReference type="InterPro" id="IPR016036">
    <property type="entry name" value="Malonyl_transacylase_ACP-bd"/>
</dbReference>
<dbReference type="InterPro" id="IPR013217">
    <property type="entry name" value="Methyltransf_12"/>
</dbReference>
<dbReference type="InterPro" id="IPR036291">
    <property type="entry name" value="NAD(P)-bd_dom_sf"/>
</dbReference>
<dbReference type="InterPro" id="IPR056501">
    <property type="entry name" value="NAD-bd_HRPKS_sdrA"/>
</dbReference>
<dbReference type="InterPro" id="IPR032821">
    <property type="entry name" value="PKS_assoc"/>
</dbReference>
<dbReference type="InterPro" id="IPR020841">
    <property type="entry name" value="PKS_Beta-ketoAc_synthase_dom"/>
</dbReference>
<dbReference type="InterPro" id="IPR042104">
    <property type="entry name" value="PKS_dehydratase_sf"/>
</dbReference>
<dbReference type="InterPro" id="IPR020807">
    <property type="entry name" value="PKS_DH"/>
</dbReference>
<dbReference type="InterPro" id="IPR049551">
    <property type="entry name" value="PKS_DH_C"/>
</dbReference>
<dbReference type="InterPro" id="IPR049552">
    <property type="entry name" value="PKS_DH_N"/>
</dbReference>
<dbReference type="InterPro" id="IPR020843">
    <property type="entry name" value="PKS_ER"/>
</dbReference>
<dbReference type="InterPro" id="IPR013968">
    <property type="entry name" value="PKS_KR"/>
</dbReference>
<dbReference type="InterPro" id="IPR049900">
    <property type="entry name" value="PKS_mFAS_DH"/>
</dbReference>
<dbReference type="InterPro" id="IPR050091">
    <property type="entry name" value="PKS_NRPS_Biosynth_Enz"/>
</dbReference>
<dbReference type="InterPro" id="IPR020806">
    <property type="entry name" value="PKS_PP-bd"/>
</dbReference>
<dbReference type="InterPro" id="IPR009081">
    <property type="entry name" value="PP-bd_ACP"/>
</dbReference>
<dbReference type="InterPro" id="IPR029063">
    <property type="entry name" value="SAM-dependent_MTases_sf"/>
</dbReference>
<dbReference type="InterPro" id="IPR016039">
    <property type="entry name" value="Thiolase-like"/>
</dbReference>
<dbReference type="PANTHER" id="PTHR43775">
    <property type="entry name" value="FATTY ACID SYNTHASE"/>
    <property type="match status" value="1"/>
</dbReference>
<dbReference type="PANTHER" id="PTHR43775:SF49">
    <property type="entry name" value="SYNTHASE, PUTATIVE (JCVI)-RELATED"/>
    <property type="match status" value="1"/>
</dbReference>
<dbReference type="Pfam" id="PF00698">
    <property type="entry name" value="Acyl_transf_1"/>
    <property type="match status" value="1"/>
</dbReference>
<dbReference type="Pfam" id="PF08240">
    <property type="entry name" value="ADH_N"/>
    <property type="match status" value="1"/>
</dbReference>
<dbReference type="Pfam" id="PF13602">
    <property type="entry name" value="ADH_zinc_N_2"/>
    <property type="match status" value="1"/>
</dbReference>
<dbReference type="Pfam" id="PF16197">
    <property type="entry name" value="KAsynt_C_assoc"/>
    <property type="match status" value="1"/>
</dbReference>
<dbReference type="Pfam" id="PF00109">
    <property type="entry name" value="ketoacyl-synt"/>
    <property type="match status" value="1"/>
</dbReference>
<dbReference type="Pfam" id="PF02801">
    <property type="entry name" value="Ketoacyl-synt_C"/>
    <property type="match status" value="1"/>
</dbReference>
<dbReference type="Pfam" id="PF08659">
    <property type="entry name" value="KR"/>
    <property type="match status" value="1"/>
</dbReference>
<dbReference type="Pfam" id="PF08242">
    <property type="entry name" value="Methyltransf_12"/>
    <property type="match status" value="1"/>
</dbReference>
<dbReference type="Pfam" id="PF23114">
    <property type="entry name" value="NAD-bd_HRPKS_sdrA"/>
    <property type="match status" value="1"/>
</dbReference>
<dbReference type="Pfam" id="PF21089">
    <property type="entry name" value="PKS_DH_N"/>
    <property type="match status" value="1"/>
</dbReference>
<dbReference type="Pfam" id="PF00550">
    <property type="entry name" value="PP-binding"/>
    <property type="match status" value="1"/>
</dbReference>
<dbReference type="Pfam" id="PF14765">
    <property type="entry name" value="PS-DH"/>
    <property type="match status" value="1"/>
</dbReference>
<dbReference type="SMART" id="SM00827">
    <property type="entry name" value="PKS_AT"/>
    <property type="match status" value="1"/>
</dbReference>
<dbReference type="SMART" id="SM00826">
    <property type="entry name" value="PKS_DH"/>
    <property type="match status" value="1"/>
</dbReference>
<dbReference type="SMART" id="SM00829">
    <property type="entry name" value="PKS_ER"/>
    <property type="match status" value="1"/>
</dbReference>
<dbReference type="SMART" id="SM00822">
    <property type="entry name" value="PKS_KR"/>
    <property type="match status" value="1"/>
</dbReference>
<dbReference type="SMART" id="SM00825">
    <property type="entry name" value="PKS_KS"/>
    <property type="match status" value="1"/>
</dbReference>
<dbReference type="SMART" id="SM00823">
    <property type="entry name" value="PKS_PP"/>
    <property type="match status" value="1"/>
</dbReference>
<dbReference type="SUPFAM" id="SSF47336">
    <property type="entry name" value="ACP-like"/>
    <property type="match status" value="1"/>
</dbReference>
<dbReference type="SUPFAM" id="SSF52151">
    <property type="entry name" value="FabD/lysophospholipase-like"/>
    <property type="match status" value="1"/>
</dbReference>
<dbReference type="SUPFAM" id="SSF50129">
    <property type="entry name" value="GroES-like"/>
    <property type="match status" value="1"/>
</dbReference>
<dbReference type="SUPFAM" id="SSF51735">
    <property type="entry name" value="NAD(P)-binding Rossmann-fold domains"/>
    <property type="match status" value="2"/>
</dbReference>
<dbReference type="SUPFAM" id="SSF55048">
    <property type="entry name" value="Probable ACP-binding domain of malonyl-CoA ACP transacylase"/>
    <property type="match status" value="1"/>
</dbReference>
<dbReference type="SUPFAM" id="SSF53335">
    <property type="entry name" value="S-adenosyl-L-methionine-dependent methyltransferases"/>
    <property type="match status" value="1"/>
</dbReference>
<dbReference type="SUPFAM" id="SSF53901">
    <property type="entry name" value="Thiolase-like"/>
    <property type="match status" value="1"/>
</dbReference>
<dbReference type="PROSITE" id="PS50075">
    <property type="entry name" value="CARRIER"/>
    <property type="match status" value="1"/>
</dbReference>
<dbReference type="PROSITE" id="PS00606">
    <property type="entry name" value="KS3_1"/>
    <property type="match status" value="1"/>
</dbReference>
<dbReference type="PROSITE" id="PS52004">
    <property type="entry name" value="KS3_2"/>
    <property type="match status" value="1"/>
</dbReference>
<dbReference type="PROSITE" id="PS52019">
    <property type="entry name" value="PKS_MFAS_DH"/>
    <property type="match status" value="1"/>
</dbReference>
<comment type="function">
    <text evidence="7 9">Highly reducing polyketide synthase; part of the gene cluster that mediates the biosynthesis of 1233A, a natural compound known as an inhibitor of HMG-CoA synthase in the mevalonate pathway and with antibacterial and antifungal activities (PubMed:32139880). The highly reducing polyketide synthase g433 gene is responsible for the 1233A backbone biosynthesis and the cytochrome P450 monooxygenase g430 catalyzes oxidation of the backbone (Probable).</text>
</comment>
<comment type="pathway">
    <text evidence="7">Mycotoxin biosynthesis.</text>
</comment>
<comment type="induction">
    <text evidence="7">Expression is increased upon exposure to hygromycin B.</text>
</comment>
<comment type="domain">
    <text evidence="9">Multidomain protein; including a ketosynthase (KS) that catalyzes repeated decarboxylative condensation to elongate the polyketide backbone; a malonyl-CoA:ACP transacylase (MAT) that selects and transfers the extender unit malonyl-CoA; a dehydratase (DH) domain that reduces hydroxyl groups to enoyl groups; a methyltransferase (CMeT) domain responsible for the incorporation of methyl groups; an enoylreductase (ER) domain that reduces enoyl groups to alkyl group; a ketoreductase (KR) domain that catalyzes beta-ketoreduction steps; and an acyl-carrier protein (ACP) that serves as the tether of the growing and completed polyketide via its phosphopantetheinyl arm.</text>
</comment>
<comment type="disruption phenotype">
    <text evidence="7">Impairs the ability to produce 1233A and its hydrolysis product 1233B.</text>
</comment>
<accession>A0A6S5ZY48</accession>
<evidence type="ECO:0000250" key="1">
    <source>
        <dbReference type="UniProtKB" id="S3D9F1"/>
    </source>
</evidence>
<evidence type="ECO:0000255" key="2"/>
<evidence type="ECO:0000255" key="3">
    <source>
        <dbReference type="PROSITE-ProRule" id="PRU00258"/>
    </source>
</evidence>
<evidence type="ECO:0000255" key="4">
    <source>
        <dbReference type="PROSITE-ProRule" id="PRU01348"/>
    </source>
</evidence>
<evidence type="ECO:0000255" key="5">
    <source>
        <dbReference type="PROSITE-ProRule" id="PRU01363"/>
    </source>
</evidence>
<evidence type="ECO:0000256" key="6">
    <source>
        <dbReference type="SAM" id="MobiDB-lite"/>
    </source>
</evidence>
<evidence type="ECO:0000269" key="7">
    <source>
    </source>
</evidence>
<evidence type="ECO:0000303" key="8">
    <source>
    </source>
</evidence>
<evidence type="ECO:0000305" key="9">
    <source>
    </source>
</evidence>
<name>G433_FUSSX</name>